<organism>
    <name type="scientific">Yersinia pestis</name>
    <dbReference type="NCBI Taxonomy" id="632"/>
    <lineage>
        <taxon>Bacteria</taxon>
        <taxon>Pseudomonadati</taxon>
        <taxon>Pseudomonadota</taxon>
        <taxon>Gammaproteobacteria</taxon>
        <taxon>Enterobacterales</taxon>
        <taxon>Yersiniaceae</taxon>
        <taxon>Yersinia</taxon>
    </lineage>
</organism>
<feature type="chain" id="PRO_0000214437" description="FAD assembly factor SdhE">
    <location>
        <begin position="1"/>
        <end position="88"/>
    </location>
</feature>
<evidence type="ECO:0000250" key="1">
    <source>
        <dbReference type="UniProtKB" id="G4V4G2"/>
    </source>
</evidence>
<evidence type="ECO:0000250" key="2">
    <source>
        <dbReference type="UniProtKB" id="P64559"/>
    </source>
</evidence>
<evidence type="ECO:0000305" key="3"/>
<comment type="function">
    <text evidence="1">An FAD assembly protein, which accelerates covalent attachment of the cofactor into other proteins. Plays an essential role in the assembly of succinate dehydrogenase (SDH, respiratory complex II), an enzyme complex that is a component of both the tricarboxylic acid cycle and the electron transport chain, and which couples the oxidation of succinate to fumarate with the reduction of ubiquinone (coenzyme Q) to ubiquinol. Required for flavinylation (covalent attachment of FAD) of the flavoprotein subunit SdhA of SDH and other flavinylated proteins as well.</text>
</comment>
<comment type="subunit">
    <text evidence="2">Monomer.</text>
</comment>
<comment type="subcellular location">
    <subcellularLocation>
        <location evidence="1">Cytoplasm</location>
    </subcellularLocation>
</comment>
<comment type="similarity">
    <text evidence="3">Belongs to the SdhE FAD assembly factor family.</text>
</comment>
<proteinExistence type="inferred from homology"/>
<protein>
    <recommendedName>
        <fullName>FAD assembly factor SdhE</fullName>
    </recommendedName>
</protein>
<gene>
    <name type="primary">sdhE</name>
    <name type="ordered locus">YPO0897</name>
    <name type="ordered locus">y3282</name>
    <name type="ordered locus">YP_3594</name>
</gene>
<accession>Q8ZHJ5</accession>
<accession>Q0WIE2</accession>
<accession>Q74Q95</accession>
<accession>Q7CGT4</accession>
<keyword id="KW-0143">Chaperone</keyword>
<keyword id="KW-0963">Cytoplasm</keyword>
<keyword id="KW-1185">Reference proteome</keyword>
<reference key="1">
    <citation type="journal article" date="2001" name="Nature">
        <title>Genome sequence of Yersinia pestis, the causative agent of plague.</title>
        <authorList>
            <person name="Parkhill J."/>
            <person name="Wren B.W."/>
            <person name="Thomson N.R."/>
            <person name="Titball R.W."/>
            <person name="Holden M.T.G."/>
            <person name="Prentice M.B."/>
            <person name="Sebaihia M."/>
            <person name="James K.D."/>
            <person name="Churcher C.M."/>
            <person name="Mungall K.L."/>
            <person name="Baker S."/>
            <person name="Basham D."/>
            <person name="Bentley S.D."/>
            <person name="Brooks K."/>
            <person name="Cerdeno-Tarraga A.-M."/>
            <person name="Chillingworth T."/>
            <person name="Cronin A."/>
            <person name="Davies R.M."/>
            <person name="Davis P."/>
            <person name="Dougan G."/>
            <person name="Feltwell T."/>
            <person name="Hamlin N."/>
            <person name="Holroyd S."/>
            <person name="Jagels K."/>
            <person name="Karlyshev A.V."/>
            <person name="Leather S."/>
            <person name="Moule S."/>
            <person name="Oyston P.C.F."/>
            <person name="Quail M.A."/>
            <person name="Rutherford K.M."/>
            <person name="Simmonds M."/>
            <person name="Skelton J."/>
            <person name="Stevens K."/>
            <person name="Whitehead S."/>
            <person name="Barrell B.G."/>
        </authorList>
    </citation>
    <scope>NUCLEOTIDE SEQUENCE [LARGE SCALE GENOMIC DNA]</scope>
    <source>
        <strain>CO-92 / Biovar Orientalis</strain>
    </source>
</reference>
<reference key="2">
    <citation type="journal article" date="2002" name="J. Bacteriol.">
        <title>Genome sequence of Yersinia pestis KIM.</title>
        <authorList>
            <person name="Deng W."/>
            <person name="Burland V."/>
            <person name="Plunkett G. III"/>
            <person name="Boutin A."/>
            <person name="Mayhew G.F."/>
            <person name="Liss P."/>
            <person name="Perna N.T."/>
            <person name="Rose D.J."/>
            <person name="Mau B."/>
            <person name="Zhou S."/>
            <person name="Schwartz D.C."/>
            <person name="Fetherston J.D."/>
            <person name="Lindler L.E."/>
            <person name="Brubaker R.R."/>
            <person name="Plano G.V."/>
            <person name="Straley S.C."/>
            <person name="McDonough K.A."/>
            <person name="Nilles M.L."/>
            <person name="Matson J.S."/>
            <person name="Blattner F.R."/>
            <person name="Perry R.D."/>
        </authorList>
    </citation>
    <scope>NUCLEOTIDE SEQUENCE [LARGE SCALE GENOMIC DNA]</scope>
    <source>
        <strain>KIM10+ / Biovar Mediaevalis</strain>
    </source>
</reference>
<reference key="3">
    <citation type="journal article" date="2004" name="DNA Res.">
        <title>Complete genome sequence of Yersinia pestis strain 91001, an isolate avirulent to humans.</title>
        <authorList>
            <person name="Song Y."/>
            <person name="Tong Z."/>
            <person name="Wang J."/>
            <person name="Wang L."/>
            <person name="Guo Z."/>
            <person name="Han Y."/>
            <person name="Zhang J."/>
            <person name="Pei D."/>
            <person name="Zhou D."/>
            <person name="Qin H."/>
            <person name="Pang X."/>
            <person name="Han Y."/>
            <person name="Zhai J."/>
            <person name="Li M."/>
            <person name="Cui B."/>
            <person name="Qi Z."/>
            <person name="Jin L."/>
            <person name="Dai R."/>
            <person name="Chen F."/>
            <person name="Li S."/>
            <person name="Ye C."/>
            <person name="Du Z."/>
            <person name="Lin W."/>
            <person name="Wang J."/>
            <person name="Yu J."/>
            <person name="Yang H."/>
            <person name="Wang J."/>
            <person name="Huang P."/>
            <person name="Yang R."/>
        </authorList>
    </citation>
    <scope>NUCLEOTIDE SEQUENCE [LARGE SCALE GENOMIC DNA]</scope>
    <source>
        <strain>91001 / Biovar Mediaevalis</strain>
    </source>
</reference>
<sequence length="88" mass="10512">MEIDNKARIHWACRRGMRELDISIMPFFEYEYDSLSDNEKQAFIRLLECDDPDLFNWLMNHGEPQDSELYQMVKLIQSRNKARGPVAM</sequence>
<name>SDHE_YERPE</name>
<dbReference type="EMBL" id="AL590842">
    <property type="protein sequence ID" value="CAL19565.1"/>
    <property type="molecule type" value="Genomic_DNA"/>
</dbReference>
<dbReference type="EMBL" id="AE009952">
    <property type="protein sequence ID" value="AAM86832.1"/>
    <property type="molecule type" value="Genomic_DNA"/>
</dbReference>
<dbReference type="EMBL" id="AE017042">
    <property type="protein sequence ID" value="AAS63745.1"/>
    <property type="molecule type" value="Genomic_DNA"/>
</dbReference>
<dbReference type="PIR" id="AC0110">
    <property type="entry name" value="AC0110"/>
</dbReference>
<dbReference type="RefSeq" id="WP_002209939.1">
    <property type="nucleotide sequence ID" value="NZ_WUCM01000038.1"/>
</dbReference>
<dbReference type="RefSeq" id="YP_002345946.1">
    <property type="nucleotide sequence ID" value="NC_003143.1"/>
</dbReference>
<dbReference type="SMR" id="Q8ZHJ5"/>
<dbReference type="STRING" id="214092.YPO0897"/>
<dbReference type="PaxDb" id="214092-YPO0897"/>
<dbReference type="DNASU" id="1148229"/>
<dbReference type="EnsemblBacteria" id="AAS63745">
    <property type="protein sequence ID" value="AAS63745"/>
    <property type="gene ID" value="YP_3594"/>
</dbReference>
<dbReference type="GeneID" id="57973742"/>
<dbReference type="KEGG" id="ype:YPO0897"/>
<dbReference type="KEGG" id="ypk:y3282"/>
<dbReference type="KEGG" id="ypm:YP_3594"/>
<dbReference type="PATRIC" id="fig|214092.21.peg.1169"/>
<dbReference type="eggNOG" id="COG2938">
    <property type="taxonomic scope" value="Bacteria"/>
</dbReference>
<dbReference type="HOGENOM" id="CLU_103054_2_2_6"/>
<dbReference type="OMA" id="FEHEYDT"/>
<dbReference type="OrthoDB" id="9180899at2"/>
<dbReference type="Proteomes" id="UP000000815">
    <property type="component" value="Chromosome"/>
</dbReference>
<dbReference type="Proteomes" id="UP000001019">
    <property type="component" value="Chromosome"/>
</dbReference>
<dbReference type="Proteomes" id="UP000002490">
    <property type="component" value="Chromosome"/>
</dbReference>
<dbReference type="GO" id="GO:0005737">
    <property type="term" value="C:cytoplasm"/>
    <property type="evidence" value="ECO:0007669"/>
    <property type="project" value="UniProtKB-SubCell"/>
</dbReference>
<dbReference type="GO" id="GO:0006105">
    <property type="term" value="P:succinate metabolic process"/>
    <property type="evidence" value="ECO:0000318"/>
    <property type="project" value="GO_Central"/>
</dbReference>
<dbReference type="FunFam" id="1.10.150.250:FF:000001">
    <property type="entry name" value="FAD assembly factor SdhE"/>
    <property type="match status" value="1"/>
</dbReference>
<dbReference type="Gene3D" id="1.10.150.250">
    <property type="entry name" value="Flavinator of succinate dehydrogenase"/>
    <property type="match status" value="1"/>
</dbReference>
<dbReference type="InterPro" id="IPR005631">
    <property type="entry name" value="SDH"/>
</dbReference>
<dbReference type="InterPro" id="IPR036714">
    <property type="entry name" value="SDH_sf"/>
</dbReference>
<dbReference type="InterPro" id="IPR050531">
    <property type="entry name" value="SdhE_FAD_assembly_factor"/>
</dbReference>
<dbReference type="NCBIfam" id="NF008130">
    <property type="entry name" value="PRK10878.1"/>
    <property type="match status" value="1"/>
</dbReference>
<dbReference type="PANTHER" id="PTHR39585">
    <property type="entry name" value="FAD ASSEMBLY FACTOR SDHE"/>
    <property type="match status" value="1"/>
</dbReference>
<dbReference type="PANTHER" id="PTHR39585:SF1">
    <property type="entry name" value="FAD ASSEMBLY FACTOR SDHE"/>
    <property type="match status" value="1"/>
</dbReference>
<dbReference type="Pfam" id="PF03937">
    <property type="entry name" value="Sdh5"/>
    <property type="match status" value="1"/>
</dbReference>
<dbReference type="SUPFAM" id="SSF109910">
    <property type="entry name" value="YgfY-like"/>
    <property type="match status" value="1"/>
</dbReference>